<name>IBPA_SHIBS</name>
<sequence length="137" mass="15774">MRNFDLSPLYRSAIGFDRLFNHLENNQSQSNGGYPPYNVELVDENHYRIAIAVAGFAESELEITAQDNLLVVKGAHADEQKERTYLYQGIAERNFERKFQLAENIHVRGANLVNGLLYIDLERVIPEAKKPRRIEIN</sequence>
<accession>Q31UU6</accession>
<feature type="chain" id="PRO_1000022023" description="Small heat shock protein IbpA">
    <location>
        <begin position="1"/>
        <end position="137"/>
    </location>
</feature>
<feature type="domain" description="sHSP" evidence="2">
    <location>
        <begin position="28"/>
        <end position="137"/>
    </location>
</feature>
<gene>
    <name evidence="1" type="primary">ibpA</name>
    <name type="ordered locus">SBO_3684</name>
</gene>
<protein>
    <recommendedName>
        <fullName evidence="1">Small heat shock protein IbpA</fullName>
    </recommendedName>
    <alternativeName>
        <fullName evidence="1">16 kDa heat shock protein A</fullName>
    </alternativeName>
</protein>
<comment type="function">
    <text evidence="1">Associates with aggregated proteins, together with IbpB, to stabilize and protect them from irreversible denaturation and extensive proteolysis during heat shock and oxidative stress. Aggregated proteins bound to the IbpAB complex are more efficiently refolded and reactivated by the ATP-dependent chaperone systems ClpB and DnaK/DnaJ/GrpE. Its activity is ATP-independent.</text>
</comment>
<comment type="subunit">
    <text evidence="1">Monomer. Forms homomultimers of about 100-150 subunits at optimal growth temperatures. Conformation changes to monomers at high temperatures or high ionic concentrations.</text>
</comment>
<comment type="subcellular location">
    <subcellularLocation>
        <location evidence="1">Cytoplasm</location>
    </subcellularLocation>
</comment>
<comment type="similarity">
    <text evidence="1 2">Belongs to the small heat shock protein (HSP20) family.</text>
</comment>
<dbReference type="EMBL" id="CP000036">
    <property type="protein sequence ID" value="ABB68162.1"/>
    <property type="molecule type" value="Genomic_DNA"/>
</dbReference>
<dbReference type="RefSeq" id="WP_001243437.1">
    <property type="nucleotide sequence ID" value="NC_007613.1"/>
</dbReference>
<dbReference type="SMR" id="Q31UU6"/>
<dbReference type="GeneID" id="93778428"/>
<dbReference type="KEGG" id="sbo:SBO_3684"/>
<dbReference type="HOGENOM" id="CLU_046737_4_2_6"/>
<dbReference type="Proteomes" id="UP000007067">
    <property type="component" value="Chromosome"/>
</dbReference>
<dbReference type="GO" id="GO:0005737">
    <property type="term" value="C:cytoplasm"/>
    <property type="evidence" value="ECO:0007669"/>
    <property type="project" value="UniProtKB-SubCell"/>
</dbReference>
<dbReference type="GO" id="GO:0050821">
    <property type="term" value="P:protein stabilization"/>
    <property type="evidence" value="ECO:0007669"/>
    <property type="project" value="UniProtKB-UniRule"/>
</dbReference>
<dbReference type="CDD" id="cd06470">
    <property type="entry name" value="ACD_IbpA-B_like"/>
    <property type="match status" value="1"/>
</dbReference>
<dbReference type="FunFam" id="2.60.40.790:FF:000002">
    <property type="entry name" value="Small heat shock protein IbpA"/>
    <property type="match status" value="1"/>
</dbReference>
<dbReference type="Gene3D" id="2.60.40.790">
    <property type="match status" value="1"/>
</dbReference>
<dbReference type="HAMAP" id="MF_02000">
    <property type="entry name" value="HSP20_IbpA"/>
    <property type="match status" value="1"/>
</dbReference>
<dbReference type="InterPro" id="IPR002068">
    <property type="entry name" value="A-crystallin/Hsp20_dom"/>
</dbReference>
<dbReference type="InterPro" id="IPR037913">
    <property type="entry name" value="ACD_IbpA/B"/>
</dbReference>
<dbReference type="InterPro" id="IPR008978">
    <property type="entry name" value="HSP20-like_chaperone"/>
</dbReference>
<dbReference type="InterPro" id="IPR023728">
    <property type="entry name" value="HSP20_IbpA"/>
</dbReference>
<dbReference type="NCBIfam" id="NF008013">
    <property type="entry name" value="PRK10743.1"/>
    <property type="match status" value="1"/>
</dbReference>
<dbReference type="PANTHER" id="PTHR47062">
    <property type="match status" value="1"/>
</dbReference>
<dbReference type="PANTHER" id="PTHR47062:SF1">
    <property type="entry name" value="SMALL HEAT SHOCK PROTEIN IBPA"/>
    <property type="match status" value="1"/>
</dbReference>
<dbReference type="Pfam" id="PF00011">
    <property type="entry name" value="HSP20"/>
    <property type="match status" value="1"/>
</dbReference>
<dbReference type="SUPFAM" id="SSF49764">
    <property type="entry name" value="HSP20-like chaperones"/>
    <property type="match status" value="1"/>
</dbReference>
<dbReference type="PROSITE" id="PS01031">
    <property type="entry name" value="SHSP"/>
    <property type="match status" value="1"/>
</dbReference>
<evidence type="ECO:0000255" key="1">
    <source>
        <dbReference type="HAMAP-Rule" id="MF_02000"/>
    </source>
</evidence>
<evidence type="ECO:0000255" key="2">
    <source>
        <dbReference type="PROSITE-ProRule" id="PRU00285"/>
    </source>
</evidence>
<reference key="1">
    <citation type="journal article" date="2005" name="Nucleic Acids Res.">
        <title>Genome dynamics and diversity of Shigella species, the etiologic agents of bacillary dysentery.</title>
        <authorList>
            <person name="Yang F."/>
            <person name="Yang J."/>
            <person name="Zhang X."/>
            <person name="Chen L."/>
            <person name="Jiang Y."/>
            <person name="Yan Y."/>
            <person name="Tang X."/>
            <person name="Wang J."/>
            <person name="Xiong Z."/>
            <person name="Dong J."/>
            <person name="Xue Y."/>
            <person name="Zhu Y."/>
            <person name="Xu X."/>
            <person name="Sun L."/>
            <person name="Chen S."/>
            <person name="Nie H."/>
            <person name="Peng J."/>
            <person name="Xu J."/>
            <person name="Wang Y."/>
            <person name="Yuan Z."/>
            <person name="Wen Y."/>
            <person name="Yao Z."/>
            <person name="Shen Y."/>
            <person name="Qiang B."/>
            <person name="Hou Y."/>
            <person name="Yu J."/>
            <person name="Jin Q."/>
        </authorList>
    </citation>
    <scope>NUCLEOTIDE SEQUENCE [LARGE SCALE GENOMIC DNA]</scope>
    <source>
        <strain>Sb227</strain>
    </source>
</reference>
<proteinExistence type="inferred from homology"/>
<keyword id="KW-0143">Chaperone</keyword>
<keyword id="KW-0963">Cytoplasm</keyword>
<keyword id="KW-0346">Stress response</keyword>
<organism>
    <name type="scientific">Shigella boydii serotype 4 (strain Sb227)</name>
    <dbReference type="NCBI Taxonomy" id="300268"/>
    <lineage>
        <taxon>Bacteria</taxon>
        <taxon>Pseudomonadati</taxon>
        <taxon>Pseudomonadota</taxon>
        <taxon>Gammaproteobacteria</taxon>
        <taxon>Enterobacterales</taxon>
        <taxon>Enterobacteriaceae</taxon>
        <taxon>Shigella</taxon>
    </lineage>
</organism>